<protein>
    <recommendedName>
        <fullName evidence="1">Zinc transport protein ZntB</fullName>
    </recommendedName>
</protein>
<feature type="chain" id="PRO_1000069071" description="Zinc transport protein ZntB">
    <location>
        <begin position="1"/>
        <end position="327"/>
    </location>
</feature>
<feature type="topological domain" description="Cytoplasmic" evidence="1">
    <location>
        <begin position="1"/>
        <end position="273"/>
    </location>
</feature>
<feature type="transmembrane region" description="Helical" evidence="1">
    <location>
        <begin position="274"/>
        <end position="294"/>
    </location>
</feature>
<feature type="topological domain" description="Periplasmic" evidence="1">
    <location>
        <begin position="295"/>
        <end position="300"/>
    </location>
</feature>
<feature type="transmembrane region" description="Helical" evidence="1">
    <location>
        <begin position="301"/>
        <end position="321"/>
    </location>
</feature>
<feature type="topological domain" description="Cytoplasmic" evidence="1">
    <location>
        <begin position="322"/>
        <end position="327"/>
    </location>
</feature>
<keyword id="KW-0997">Cell inner membrane</keyword>
<keyword id="KW-1003">Cell membrane</keyword>
<keyword id="KW-0406">Ion transport</keyword>
<keyword id="KW-0472">Membrane</keyword>
<keyword id="KW-0812">Transmembrane</keyword>
<keyword id="KW-1133">Transmembrane helix</keyword>
<keyword id="KW-0813">Transport</keyword>
<keyword id="KW-0862">Zinc</keyword>
<dbReference type="EMBL" id="CP000247">
    <property type="protein sequence ID" value="ABG69404.1"/>
    <property type="molecule type" value="Genomic_DNA"/>
</dbReference>
<dbReference type="RefSeq" id="WP_000387391.1">
    <property type="nucleotide sequence ID" value="NC_008253.1"/>
</dbReference>
<dbReference type="SMR" id="Q0TI25"/>
<dbReference type="KEGG" id="ecp:ECP_1395"/>
<dbReference type="HOGENOM" id="CLU_007127_2_0_6"/>
<dbReference type="Proteomes" id="UP000009182">
    <property type="component" value="Chromosome"/>
</dbReference>
<dbReference type="GO" id="GO:0005886">
    <property type="term" value="C:plasma membrane"/>
    <property type="evidence" value="ECO:0007669"/>
    <property type="project" value="UniProtKB-SubCell"/>
</dbReference>
<dbReference type="GO" id="GO:0050897">
    <property type="term" value="F:cobalt ion binding"/>
    <property type="evidence" value="ECO:0007669"/>
    <property type="project" value="TreeGrafter"/>
</dbReference>
<dbReference type="GO" id="GO:0015087">
    <property type="term" value="F:cobalt ion transmembrane transporter activity"/>
    <property type="evidence" value="ECO:0007669"/>
    <property type="project" value="TreeGrafter"/>
</dbReference>
<dbReference type="GO" id="GO:0000287">
    <property type="term" value="F:magnesium ion binding"/>
    <property type="evidence" value="ECO:0007669"/>
    <property type="project" value="TreeGrafter"/>
</dbReference>
<dbReference type="GO" id="GO:0015095">
    <property type="term" value="F:magnesium ion transmembrane transporter activity"/>
    <property type="evidence" value="ECO:0007669"/>
    <property type="project" value="TreeGrafter"/>
</dbReference>
<dbReference type="GO" id="GO:0005385">
    <property type="term" value="F:zinc ion transmembrane transporter activity"/>
    <property type="evidence" value="ECO:0007669"/>
    <property type="project" value="UniProtKB-UniRule"/>
</dbReference>
<dbReference type="CDD" id="cd12833">
    <property type="entry name" value="ZntB-like_1"/>
    <property type="match status" value="1"/>
</dbReference>
<dbReference type="FunFam" id="1.20.58.340:FF:000002">
    <property type="entry name" value="Zinc transport protein ZntB"/>
    <property type="match status" value="1"/>
</dbReference>
<dbReference type="FunFam" id="1.20.58.340:FF:000003">
    <property type="entry name" value="Zinc transport protein ZntB"/>
    <property type="match status" value="1"/>
</dbReference>
<dbReference type="FunFam" id="3.30.460.20:FF:000001">
    <property type="entry name" value="Zinc transport protein ZntB"/>
    <property type="match status" value="1"/>
</dbReference>
<dbReference type="Gene3D" id="3.30.460.20">
    <property type="entry name" value="CorA soluble domain-like"/>
    <property type="match status" value="1"/>
</dbReference>
<dbReference type="Gene3D" id="1.20.58.340">
    <property type="entry name" value="Magnesium transport protein CorA, transmembrane region"/>
    <property type="match status" value="2"/>
</dbReference>
<dbReference type="HAMAP" id="MF_01565">
    <property type="entry name" value="ZntB"/>
    <property type="match status" value="1"/>
</dbReference>
<dbReference type="InterPro" id="IPR045861">
    <property type="entry name" value="CorA_cytoplasmic_dom"/>
</dbReference>
<dbReference type="InterPro" id="IPR045863">
    <property type="entry name" value="CorA_TM1_TM2"/>
</dbReference>
<dbReference type="InterPro" id="IPR002523">
    <property type="entry name" value="MgTranspt_CorA/ZnTranspt_ZntB"/>
</dbReference>
<dbReference type="InterPro" id="IPR023714">
    <property type="entry name" value="Zn_transp_ZntB"/>
</dbReference>
<dbReference type="NCBIfam" id="NF007092">
    <property type="entry name" value="PRK09546.1"/>
    <property type="match status" value="1"/>
</dbReference>
<dbReference type="PANTHER" id="PTHR46494">
    <property type="entry name" value="CORA FAMILY METAL ION TRANSPORTER (EUROFUNG)"/>
    <property type="match status" value="1"/>
</dbReference>
<dbReference type="PANTHER" id="PTHR46494:SF3">
    <property type="entry name" value="ZINC TRANSPORT PROTEIN ZNTB"/>
    <property type="match status" value="1"/>
</dbReference>
<dbReference type="Pfam" id="PF01544">
    <property type="entry name" value="CorA"/>
    <property type="match status" value="1"/>
</dbReference>
<dbReference type="SUPFAM" id="SSF143865">
    <property type="entry name" value="CorA soluble domain-like"/>
    <property type="match status" value="1"/>
</dbReference>
<dbReference type="SUPFAM" id="SSF144083">
    <property type="entry name" value="Magnesium transport protein CorA, transmembrane region"/>
    <property type="match status" value="1"/>
</dbReference>
<gene>
    <name evidence="1" type="primary">zntB</name>
    <name type="ordered locus">ECP_1395</name>
</gene>
<reference key="1">
    <citation type="journal article" date="2006" name="Mol. Microbiol.">
        <title>Role of pathogenicity island-associated integrases in the genome plasticity of uropathogenic Escherichia coli strain 536.</title>
        <authorList>
            <person name="Hochhut B."/>
            <person name="Wilde C."/>
            <person name="Balling G."/>
            <person name="Middendorf B."/>
            <person name="Dobrindt U."/>
            <person name="Brzuszkiewicz E."/>
            <person name="Gottschalk G."/>
            <person name="Carniel E."/>
            <person name="Hacker J."/>
        </authorList>
    </citation>
    <scope>NUCLEOTIDE SEQUENCE [LARGE SCALE GENOMIC DNA]</scope>
    <source>
        <strain>536 / UPEC</strain>
    </source>
</reference>
<proteinExistence type="inferred from homology"/>
<comment type="function">
    <text evidence="1">Zinc transporter. Acts as a Zn(2+):proton symporter, which likely mediates zinc ion uptake.</text>
</comment>
<comment type="catalytic activity">
    <reaction evidence="1">
        <text>Zn(2+)(out) + H(+)(out) = Zn(2+)(in) + H(+)(in)</text>
        <dbReference type="Rhea" id="RHEA:71195"/>
        <dbReference type="ChEBI" id="CHEBI:15378"/>
        <dbReference type="ChEBI" id="CHEBI:29105"/>
    </reaction>
    <physiologicalReaction direction="left-to-right" evidence="1">
        <dbReference type="Rhea" id="RHEA:71196"/>
    </physiologicalReaction>
</comment>
<comment type="subcellular location">
    <subcellularLocation>
        <location evidence="1">Cell inner membrane</location>
        <topology evidence="1">Multi-pass membrane protein</topology>
    </subcellularLocation>
</comment>
<comment type="similarity">
    <text evidence="1">Belongs to the CorA metal ion transporter (MIT) (TC 1.A.35) family.</text>
</comment>
<organism>
    <name type="scientific">Escherichia coli O6:K15:H31 (strain 536 / UPEC)</name>
    <dbReference type="NCBI Taxonomy" id="362663"/>
    <lineage>
        <taxon>Bacteria</taxon>
        <taxon>Pseudomonadati</taxon>
        <taxon>Pseudomonadota</taxon>
        <taxon>Gammaproteobacteria</taxon>
        <taxon>Enterobacterales</taxon>
        <taxon>Enterobacteriaceae</taxon>
        <taxon>Escherichia</taxon>
    </lineage>
</organism>
<evidence type="ECO:0000255" key="1">
    <source>
        <dbReference type="HAMAP-Rule" id="MF_01565"/>
    </source>
</evidence>
<sequence length="327" mass="36630">MEAIKGSDVNVPDAVFAWMLDGRGGVKPLENTDVIDEAHPCWLHLNYVHHDSAQWLATTPLLPNNVRDALAGESTRPRVSRLGEGTLITLRCINGSTDERPDQLVAMRVYMDGRLIVSTRQRKVLALDDVVSDLEEGTGPTDCGGWLVDVCDALTDHSSEFIEQLHDKIIDLEDNLLDQQIPPRGFLALLRKQLIVMRRYMAPQRDVYARLASERMPWMSDDQRRRMQDIADRLGRGLDEIDACIARTGVMADEIAQVMQENLARRTYTMSLMAMVFLPSTFLTGLFGVNLGGIPGGGWQFGFSIFCILLVVLIGGVALWLHRSKWL</sequence>
<name>ZNTB_ECOL5</name>
<accession>Q0TI25</accession>